<gene>
    <name evidence="1" type="primary">xni</name>
    <name evidence="1" type="synonym">ygdG</name>
    <name type="ordered locus">NT01EI_0824</name>
</gene>
<feature type="chain" id="PRO_1000213796" description="Flap endonuclease Xni">
    <location>
        <begin position="1"/>
        <end position="253"/>
    </location>
</feature>
<feature type="domain" description="5'-3' exonuclease" evidence="1">
    <location>
        <begin position="160"/>
        <end position="250"/>
    </location>
</feature>
<feature type="region of interest" description="Interaction with DNA" evidence="1">
    <location>
        <begin position="184"/>
        <end position="189"/>
    </location>
</feature>
<feature type="binding site" evidence="1">
    <location>
        <position position="104"/>
    </location>
    <ligand>
        <name>Mg(2+)</name>
        <dbReference type="ChEBI" id="CHEBI:18420"/>
    </ligand>
</feature>
<feature type="binding site" evidence="1">
    <location>
        <position position="171"/>
    </location>
    <ligand>
        <name>K(+)</name>
        <dbReference type="ChEBI" id="CHEBI:29103"/>
    </ligand>
</feature>
<feature type="binding site" evidence="1">
    <location>
        <position position="172"/>
    </location>
    <ligand>
        <name>K(+)</name>
        <dbReference type="ChEBI" id="CHEBI:29103"/>
    </ligand>
</feature>
<feature type="binding site" evidence="1">
    <location>
        <position position="180"/>
    </location>
    <ligand>
        <name>K(+)</name>
        <dbReference type="ChEBI" id="CHEBI:29103"/>
    </ligand>
</feature>
<feature type="binding site" evidence="1">
    <location>
        <position position="182"/>
    </location>
    <ligand>
        <name>K(+)</name>
        <dbReference type="ChEBI" id="CHEBI:29103"/>
    </ligand>
</feature>
<feature type="binding site" evidence="1">
    <location>
        <position position="185"/>
    </location>
    <ligand>
        <name>K(+)</name>
        <dbReference type="ChEBI" id="CHEBI:29103"/>
    </ligand>
</feature>
<protein>
    <recommendedName>
        <fullName evidence="1">Flap endonuclease Xni</fullName>
        <shortName evidence="1">FEN</shortName>
        <ecNumber evidence="1">3.1.-.-</ecNumber>
    </recommendedName>
</protein>
<evidence type="ECO:0000255" key="1">
    <source>
        <dbReference type="HAMAP-Rule" id="MF_01192"/>
    </source>
</evidence>
<accession>C5BHA5</accession>
<keyword id="KW-0238">DNA-binding</keyword>
<keyword id="KW-0255">Endonuclease</keyword>
<keyword id="KW-0378">Hydrolase</keyword>
<keyword id="KW-0460">Magnesium</keyword>
<keyword id="KW-0479">Metal-binding</keyword>
<keyword id="KW-0540">Nuclease</keyword>
<keyword id="KW-0630">Potassium</keyword>
<dbReference type="EC" id="3.1.-.-" evidence="1"/>
<dbReference type="EMBL" id="CP001600">
    <property type="protein sequence ID" value="ACR68041.1"/>
    <property type="molecule type" value="Genomic_DNA"/>
</dbReference>
<dbReference type="RefSeq" id="WP_015870234.1">
    <property type="nucleotide sequence ID" value="NZ_CP169062.1"/>
</dbReference>
<dbReference type="SMR" id="C5BHA5"/>
<dbReference type="STRING" id="67780.B6E78_14720"/>
<dbReference type="GeneID" id="69537881"/>
<dbReference type="KEGG" id="eic:NT01EI_0824"/>
<dbReference type="PATRIC" id="fig|634503.3.peg.744"/>
<dbReference type="HOGENOM" id="CLU_004675_1_2_6"/>
<dbReference type="OrthoDB" id="8070997at2"/>
<dbReference type="Proteomes" id="UP000001485">
    <property type="component" value="Chromosome"/>
</dbReference>
<dbReference type="GO" id="GO:0008409">
    <property type="term" value="F:5'-3' exonuclease activity"/>
    <property type="evidence" value="ECO:0007669"/>
    <property type="project" value="InterPro"/>
</dbReference>
<dbReference type="GO" id="GO:0017108">
    <property type="term" value="F:5'-flap endonuclease activity"/>
    <property type="evidence" value="ECO:0007669"/>
    <property type="project" value="UniProtKB-UniRule"/>
</dbReference>
<dbReference type="GO" id="GO:0003677">
    <property type="term" value="F:DNA binding"/>
    <property type="evidence" value="ECO:0007669"/>
    <property type="project" value="UniProtKB-UniRule"/>
</dbReference>
<dbReference type="GO" id="GO:0000287">
    <property type="term" value="F:magnesium ion binding"/>
    <property type="evidence" value="ECO:0007669"/>
    <property type="project" value="UniProtKB-UniRule"/>
</dbReference>
<dbReference type="GO" id="GO:0030955">
    <property type="term" value="F:potassium ion binding"/>
    <property type="evidence" value="ECO:0007669"/>
    <property type="project" value="UniProtKB-UniRule"/>
</dbReference>
<dbReference type="GO" id="GO:0033567">
    <property type="term" value="P:DNA replication, Okazaki fragment processing"/>
    <property type="evidence" value="ECO:0007669"/>
    <property type="project" value="UniProtKB-UniRule"/>
</dbReference>
<dbReference type="CDD" id="cd09898">
    <property type="entry name" value="H3TH_53EXO"/>
    <property type="match status" value="1"/>
</dbReference>
<dbReference type="CDD" id="cd09859">
    <property type="entry name" value="PIN_53EXO"/>
    <property type="match status" value="1"/>
</dbReference>
<dbReference type="FunFam" id="1.10.150.20:FF:000003">
    <property type="entry name" value="DNA polymerase I"/>
    <property type="match status" value="1"/>
</dbReference>
<dbReference type="FunFam" id="3.40.50.1010:FF:000011">
    <property type="entry name" value="Flap endonuclease Xni"/>
    <property type="match status" value="1"/>
</dbReference>
<dbReference type="Gene3D" id="1.10.150.20">
    <property type="entry name" value="5' to 3' exonuclease, C-terminal subdomain"/>
    <property type="match status" value="1"/>
</dbReference>
<dbReference type="Gene3D" id="3.40.50.1010">
    <property type="entry name" value="5'-nuclease"/>
    <property type="match status" value="1"/>
</dbReference>
<dbReference type="HAMAP" id="MF_01192">
    <property type="entry name" value="Xni"/>
    <property type="match status" value="1"/>
</dbReference>
<dbReference type="InterPro" id="IPR020046">
    <property type="entry name" value="5-3_exonucl_a-hlix_arch_N"/>
</dbReference>
<dbReference type="InterPro" id="IPR002421">
    <property type="entry name" value="5-3_exonuclease"/>
</dbReference>
<dbReference type="InterPro" id="IPR036279">
    <property type="entry name" value="5-3_exonuclease_C_sf"/>
</dbReference>
<dbReference type="InterPro" id="IPR020045">
    <property type="entry name" value="DNA_polI_H3TH"/>
</dbReference>
<dbReference type="InterPro" id="IPR038969">
    <property type="entry name" value="FEN"/>
</dbReference>
<dbReference type="InterPro" id="IPR008918">
    <property type="entry name" value="HhH2"/>
</dbReference>
<dbReference type="InterPro" id="IPR029060">
    <property type="entry name" value="PIN-like_dom_sf"/>
</dbReference>
<dbReference type="InterPro" id="IPR022895">
    <property type="entry name" value="Xni"/>
</dbReference>
<dbReference type="NCBIfam" id="NF007017">
    <property type="entry name" value="PRK09482.1"/>
    <property type="match status" value="1"/>
</dbReference>
<dbReference type="PANTHER" id="PTHR42646:SF2">
    <property type="entry name" value="5'-3' EXONUCLEASE FAMILY PROTEIN"/>
    <property type="match status" value="1"/>
</dbReference>
<dbReference type="PANTHER" id="PTHR42646">
    <property type="entry name" value="FLAP ENDONUCLEASE XNI"/>
    <property type="match status" value="1"/>
</dbReference>
<dbReference type="Pfam" id="PF01367">
    <property type="entry name" value="5_3_exonuc"/>
    <property type="match status" value="1"/>
</dbReference>
<dbReference type="Pfam" id="PF02739">
    <property type="entry name" value="5_3_exonuc_N"/>
    <property type="match status" value="1"/>
</dbReference>
<dbReference type="SMART" id="SM00475">
    <property type="entry name" value="53EXOc"/>
    <property type="match status" value="1"/>
</dbReference>
<dbReference type="SMART" id="SM00279">
    <property type="entry name" value="HhH2"/>
    <property type="match status" value="1"/>
</dbReference>
<dbReference type="SUPFAM" id="SSF47807">
    <property type="entry name" value="5' to 3' exonuclease, C-terminal subdomain"/>
    <property type="match status" value="1"/>
</dbReference>
<dbReference type="SUPFAM" id="SSF88723">
    <property type="entry name" value="PIN domain-like"/>
    <property type="match status" value="1"/>
</dbReference>
<reference key="1">
    <citation type="submission" date="2009-03" db="EMBL/GenBank/DDBJ databases">
        <title>Complete genome sequence of Edwardsiella ictaluri 93-146.</title>
        <authorList>
            <person name="Williams M.L."/>
            <person name="Gillaspy A.F."/>
            <person name="Dyer D.W."/>
            <person name="Thune R.L."/>
            <person name="Waldbieser G.C."/>
            <person name="Schuster S.C."/>
            <person name="Gipson J."/>
            <person name="Zaitshik J."/>
            <person name="Landry C."/>
            <person name="Lawrence M.L."/>
        </authorList>
    </citation>
    <scope>NUCLEOTIDE SEQUENCE [LARGE SCALE GENOMIC DNA]</scope>
    <source>
        <strain>93-146</strain>
    </source>
</reference>
<organism>
    <name type="scientific">Edwardsiella ictaluri (strain 93-146)</name>
    <dbReference type="NCBI Taxonomy" id="634503"/>
    <lineage>
        <taxon>Bacteria</taxon>
        <taxon>Pseudomonadati</taxon>
        <taxon>Pseudomonadota</taxon>
        <taxon>Gammaproteobacteria</taxon>
        <taxon>Enterobacterales</taxon>
        <taxon>Hafniaceae</taxon>
        <taxon>Edwardsiella</taxon>
    </lineage>
</organism>
<sequence>MSIHLLIVDALNLIRRIHAVQGSPCGDACSAALRQLVGHTTPSHAVAVFDQDDRAESWRHRLLPGYKAGRQAMPDALAQEMESLRAAFTAQGVACWHSPGNEADDLAATLAYKVAQGGHRVTIVSTDKGYCQLLSPQIQIRDYFQKRWLDLPFVQREFGVAPQQLTDFWGLAGIGSSKIPGISGIGAKTAAALLKEFGSLEALYQHLAQVPERWRQRLTEQREMAEICRRVATLQTDLALHGNLQQLRLNGRA</sequence>
<name>XNI_EDWI9</name>
<proteinExistence type="inferred from homology"/>
<comment type="function">
    <text evidence="1">Has flap endonuclease activity. During DNA replication, flap endonucleases cleave the 5'-overhanging flap structure that is generated by displacement synthesis when DNA polymerase encounters the 5'-end of a downstream Okazaki fragment.</text>
</comment>
<comment type="cofactor">
    <cofactor evidence="1">
        <name>Mg(2+)</name>
        <dbReference type="ChEBI" id="CHEBI:18420"/>
    </cofactor>
    <text evidence="1">Binds 2 Mg(2+) per subunit. Only one magnesium ion has a direct interaction with the protein, the other interactions are indirect.</text>
</comment>
<comment type="cofactor">
    <cofactor evidence="1">
        <name>K(+)</name>
        <dbReference type="ChEBI" id="CHEBI:29103"/>
    </cofactor>
    <text evidence="1">Binds 1 K(+) per subunit. The potassium ion strongly increases the affinity for DNA.</text>
</comment>
<comment type="similarity">
    <text evidence="1">Belongs to the Xni family.</text>
</comment>